<accession>A1SRB6</accession>
<feature type="chain" id="PRO_1000022990" description="Shikimate kinase">
    <location>
        <begin position="1"/>
        <end position="171"/>
    </location>
</feature>
<feature type="binding site" evidence="1">
    <location>
        <begin position="14"/>
        <end position="19"/>
    </location>
    <ligand>
        <name>ATP</name>
        <dbReference type="ChEBI" id="CHEBI:30616"/>
    </ligand>
</feature>
<feature type="binding site" evidence="1">
    <location>
        <position position="18"/>
    </location>
    <ligand>
        <name>Mg(2+)</name>
        <dbReference type="ChEBI" id="CHEBI:18420"/>
    </ligand>
</feature>
<feature type="binding site" evidence="1">
    <location>
        <position position="36"/>
    </location>
    <ligand>
        <name>substrate</name>
    </ligand>
</feature>
<feature type="binding site" evidence="1">
    <location>
        <position position="60"/>
    </location>
    <ligand>
        <name>substrate</name>
    </ligand>
</feature>
<feature type="binding site" evidence="1">
    <location>
        <position position="82"/>
    </location>
    <ligand>
        <name>substrate</name>
    </ligand>
</feature>
<feature type="binding site" evidence="1">
    <location>
        <position position="120"/>
    </location>
    <ligand>
        <name>ATP</name>
        <dbReference type="ChEBI" id="CHEBI:30616"/>
    </ligand>
</feature>
<feature type="binding site" evidence="1">
    <location>
        <position position="139"/>
    </location>
    <ligand>
        <name>substrate</name>
    </ligand>
</feature>
<feature type="binding site" evidence="1">
    <location>
        <position position="156"/>
    </location>
    <ligand>
        <name>ATP</name>
        <dbReference type="ChEBI" id="CHEBI:30616"/>
    </ligand>
</feature>
<dbReference type="EC" id="2.7.1.71" evidence="1"/>
<dbReference type="EMBL" id="CP000510">
    <property type="protein sequence ID" value="ABM02031.1"/>
    <property type="molecule type" value="Genomic_DNA"/>
</dbReference>
<dbReference type="RefSeq" id="WP_011768590.1">
    <property type="nucleotide sequence ID" value="NC_008709.1"/>
</dbReference>
<dbReference type="SMR" id="A1SRB6"/>
<dbReference type="STRING" id="357804.Ping_0163"/>
<dbReference type="KEGG" id="pin:Ping_0163"/>
<dbReference type="eggNOG" id="COG0703">
    <property type="taxonomic scope" value="Bacteria"/>
</dbReference>
<dbReference type="HOGENOM" id="CLU_057607_2_2_6"/>
<dbReference type="OrthoDB" id="9800332at2"/>
<dbReference type="UniPathway" id="UPA00053">
    <property type="reaction ID" value="UER00088"/>
</dbReference>
<dbReference type="Proteomes" id="UP000000639">
    <property type="component" value="Chromosome"/>
</dbReference>
<dbReference type="GO" id="GO:0005829">
    <property type="term" value="C:cytosol"/>
    <property type="evidence" value="ECO:0007669"/>
    <property type="project" value="TreeGrafter"/>
</dbReference>
<dbReference type="GO" id="GO:0005524">
    <property type="term" value="F:ATP binding"/>
    <property type="evidence" value="ECO:0007669"/>
    <property type="project" value="UniProtKB-UniRule"/>
</dbReference>
<dbReference type="GO" id="GO:0000287">
    <property type="term" value="F:magnesium ion binding"/>
    <property type="evidence" value="ECO:0007669"/>
    <property type="project" value="UniProtKB-UniRule"/>
</dbReference>
<dbReference type="GO" id="GO:0004765">
    <property type="term" value="F:shikimate kinase activity"/>
    <property type="evidence" value="ECO:0007669"/>
    <property type="project" value="UniProtKB-UniRule"/>
</dbReference>
<dbReference type="GO" id="GO:0008652">
    <property type="term" value="P:amino acid biosynthetic process"/>
    <property type="evidence" value="ECO:0007669"/>
    <property type="project" value="UniProtKB-KW"/>
</dbReference>
<dbReference type="GO" id="GO:0009073">
    <property type="term" value="P:aromatic amino acid family biosynthetic process"/>
    <property type="evidence" value="ECO:0007669"/>
    <property type="project" value="UniProtKB-KW"/>
</dbReference>
<dbReference type="GO" id="GO:0009423">
    <property type="term" value="P:chorismate biosynthetic process"/>
    <property type="evidence" value="ECO:0007669"/>
    <property type="project" value="UniProtKB-UniRule"/>
</dbReference>
<dbReference type="CDD" id="cd00464">
    <property type="entry name" value="SK"/>
    <property type="match status" value="1"/>
</dbReference>
<dbReference type="FunFam" id="3.40.50.300:FF:000099">
    <property type="entry name" value="Shikimate kinase 1"/>
    <property type="match status" value="1"/>
</dbReference>
<dbReference type="Gene3D" id="3.40.50.300">
    <property type="entry name" value="P-loop containing nucleotide triphosphate hydrolases"/>
    <property type="match status" value="1"/>
</dbReference>
<dbReference type="HAMAP" id="MF_00109">
    <property type="entry name" value="Shikimate_kinase"/>
    <property type="match status" value="1"/>
</dbReference>
<dbReference type="InterPro" id="IPR027417">
    <property type="entry name" value="P-loop_NTPase"/>
</dbReference>
<dbReference type="InterPro" id="IPR031322">
    <property type="entry name" value="Shikimate/glucono_kinase"/>
</dbReference>
<dbReference type="InterPro" id="IPR000623">
    <property type="entry name" value="Shikimate_kinase/TSH1"/>
</dbReference>
<dbReference type="InterPro" id="IPR023000">
    <property type="entry name" value="Shikimate_kinase_CS"/>
</dbReference>
<dbReference type="NCBIfam" id="NF003456">
    <property type="entry name" value="PRK05057.1"/>
    <property type="match status" value="1"/>
</dbReference>
<dbReference type="PANTHER" id="PTHR21087">
    <property type="entry name" value="SHIKIMATE KINASE"/>
    <property type="match status" value="1"/>
</dbReference>
<dbReference type="PANTHER" id="PTHR21087:SF16">
    <property type="entry name" value="SHIKIMATE KINASE 1, CHLOROPLASTIC"/>
    <property type="match status" value="1"/>
</dbReference>
<dbReference type="Pfam" id="PF01202">
    <property type="entry name" value="SKI"/>
    <property type="match status" value="1"/>
</dbReference>
<dbReference type="PRINTS" id="PR01100">
    <property type="entry name" value="SHIKIMTKNASE"/>
</dbReference>
<dbReference type="SUPFAM" id="SSF52540">
    <property type="entry name" value="P-loop containing nucleoside triphosphate hydrolases"/>
    <property type="match status" value="1"/>
</dbReference>
<dbReference type="PROSITE" id="PS01128">
    <property type="entry name" value="SHIKIMATE_KINASE"/>
    <property type="match status" value="1"/>
</dbReference>
<gene>
    <name evidence="1" type="primary">aroK</name>
    <name type="ordered locus">Ping_0163</name>
</gene>
<keyword id="KW-0028">Amino-acid biosynthesis</keyword>
<keyword id="KW-0057">Aromatic amino acid biosynthesis</keyword>
<keyword id="KW-0067">ATP-binding</keyword>
<keyword id="KW-0963">Cytoplasm</keyword>
<keyword id="KW-0418">Kinase</keyword>
<keyword id="KW-0460">Magnesium</keyword>
<keyword id="KW-0479">Metal-binding</keyword>
<keyword id="KW-0547">Nucleotide-binding</keyword>
<keyword id="KW-1185">Reference proteome</keyword>
<keyword id="KW-0808">Transferase</keyword>
<evidence type="ECO:0000255" key="1">
    <source>
        <dbReference type="HAMAP-Rule" id="MF_00109"/>
    </source>
</evidence>
<organism>
    <name type="scientific">Psychromonas ingrahamii (strain DSM 17664 / CCUG 51855 / 37)</name>
    <dbReference type="NCBI Taxonomy" id="357804"/>
    <lineage>
        <taxon>Bacteria</taxon>
        <taxon>Pseudomonadati</taxon>
        <taxon>Pseudomonadota</taxon>
        <taxon>Gammaproteobacteria</taxon>
        <taxon>Alteromonadales</taxon>
        <taxon>Psychromonadaceae</taxon>
        <taxon>Psychromonas</taxon>
    </lineage>
</organism>
<proteinExistence type="inferred from homology"/>
<protein>
    <recommendedName>
        <fullName evidence="1">Shikimate kinase</fullName>
        <shortName evidence="1">SK</shortName>
        <ecNumber evidence="1">2.7.1.71</ecNumber>
    </recommendedName>
</protein>
<reference key="1">
    <citation type="journal article" date="2008" name="BMC Genomics">
        <title>Genomics of an extreme psychrophile, Psychromonas ingrahamii.</title>
        <authorList>
            <person name="Riley M."/>
            <person name="Staley J.T."/>
            <person name="Danchin A."/>
            <person name="Wang T.Z."/>
            <person name="Brettin T.S."/>
            <person name="Hauser L.J."/>
            <person name="Land M.L."/>
            <person name="Thompson L.S."/>
        </authorList>
    </citation>
    <scope>NUCLEOTIDE SEQUENCE [LARGE SCALE GENOMIC DNA]</scope>
    <source>
        <strain>DSM 17664 / CCUG 51855 / 37</strain>
    </source>
</reference>
<sequence length="171" mass="19183">MAEQRNIFLIGPMGAGKSTIGRHLAQMLHLDFLDSDAEIEKKTGADIAWVFDVEGEEGFRNREQSMIDELTQKHGIVLATGGGALIRPENRIHLSARGIVVYLKTSVNKQLARTLKDKRRPLLQTDDPRTVLEALAEKRNEFYDEVADYTMETDEQSAKVVASQIIALLDF</sequence>
<comment type="function">
    <text evidence="1">Catalyzes the specific phosphorylation of the 3-hydroxyl group of shikimic acid using ATP as a cosubstrate.</text>
</comment>
<comment type="catalytic activity">
    <reaction evidence="1">
        <text>shikimate + ATP = 3-phosphoshikimate + ADP + H(+)</text>
        <dbReference type="Rhea" id="RHEA:13121"/>
        <dbReference type="ChEBI" id="CHEBI:15378"/>
        <dbReference type="ChEBI" id="CHEBI:30616"/>
        <dbReference type="ChEBI" id="CHEBI:36208"/>
        <dbReference type="ChEBI" id="CHEBI:145989"/>
        <dbReference type="ChEBI" id="CHEBI:456216"/>
        <dbReference type="EC" id="2.7.1.71"/>
    </reaction>
</comment>
<comment type="cofactor">
    <cofactor evidence="1">
        <name>Mg(2+)</name>
        <dbReference type="ChEBI" id="CHEBI:18420"/>
    </cofactor>
    <text evidence="1">Binds 1 Mg(2+) ion per subunit.</text>
</comment>
<comment type="pathway">
    <text evidence="1">Metabolic intermediate biosynthesis; chorismate biosynthesis; chorismate from D-erythrose 4-phosphate and phosphoenolpyruvate: step 5/7.</text>
</comment>
<comment type="subunit">
    <text evidence="1">Monomer.</text>
</comment>
<comment type="subcellular location">
    <subcellularLocation>
        <location evidence="1">Cytoplasm</location>
    </subcellularLocation>
</comment>
<comment type="similarity">
    <text evidence="1">Belongs to the shikimate kinase family.</text>
</comment>
<name>AROK_PSYIN</name>